<name>ASTK_ASPOR</name>
<organism>
    <name type="scientific">Aspergillus oryzae (strain ATCC 42149 / RIB 40)</name>
    <name type="common">Yellow koji mold</name>
    <dbReference type="NCBI Taxonomy" id="510516"/>
    <lineage>
        <taxon>Eukaryota</taxon>
        <taxon>Fungi</taxon>
        <taxon>Dikarya</taxon>
        <taxon>Ascomycota</taxon>
        <taxon>Pezizomycotina</taxon>
        <taxon>Eurotiomycetes</taxon>
        <taxon>Eurotiomycetidae</taxon>
        <taxon>Eurotiales</taxon>
        <taxon>Aspergillaceae</taxon>
        <taxon>Aspergillus</taxon>
        <taxon>Aspergillus subgen. Circumdati</taxon>
    </lineage>
</organism>
<protein>
    <recommendedName>
        <fullName evidence="2">Sesquiterpene phosphatase astK</fullName>
        <ecNumber evidence="1">3.1.3.-</ecNumber>
    </recommendedName>
    <alternativeName>
        <fullName evidence="2">Astellolide biosynthesis cluster protein K</fullName>
    </alternativeName>
</protein>
<evidence type="ECO:0000269" key="1">
    <source>
    </source>
</evidence>
<evidence type="ECO:0000303" key="2">
    <source>
    </source>
</evidence>
<evidence type="ECO:0000305" key="3"/>
<comment type="function">
    <text evidence="1">Sesquiterpene phosphatase; part of the gene cluster that mediates the biosynthesis of astellolides, drimane-type sesquiterpene esters that show antimicrobial, anti-inflammatory, and anti-tumor activities (PubMed:27628599). The first step in astellolide biosynthesis is performed by the sesquiterpene cyclase astC that catalyzes the formation of drimanyl pyrophosphate from farnesyl pyrophosphate (PubMed:27628599). Drimanyl pyrophosphate is then dephosphorylated by the sesquiterpene phosphatase astI to produce drimanyl monophosphate which is further dephosphorylated to drim-8-ene-11-ol by atsK (PubMed:27628599). Drim-8-ene-11-ol is converted to confertifolin, probably by the cytochrome P450 monooxygenase astD and/or the dehydrogenase astE (PubMed:27628599). The cytochrome P450 monooxygenases astB, astF and astJ then hydroxylate confertifolin at C6, C14, or C15 to form trihydroxy confertifolin (PubMed:27628599). The nonribosomal peptide synthetase astA catalyzes ester bond formation between trihydroxy contifolin and benzoic acid (BA) or 4-hydroxy benzoic acid (4HBA), leading to the formation of dideacetyl astellolides A and B, respectively (PubMed:27628599). Finally, the O-acetyltransferase astG converts dideacetyl astellolides A and B into deacetyl astellolides A and B (PubMed:27628599).</text>
</comment>
<comment type="catalytic activity">
    <reaction evidence="1">
        <text>(S,S)-drim-8-en-11-yl phosphate + H2O = (S,S)-drim-8-en-11-ol + phosphate</text>
        <dbReference type="Rhea" id="RHEA:80987"/>
        <dbReference type="ChEBI" id="CHEBI:15377"/>
        <dbReference type="ChEBI" id="CHEBI:43474"/>
        <dbReference type="ChEBI" id="CHEBI:149666"/>
        <dbReference type="ChEBI" id="CHEBI:231797"/>
    </reaction>
    <physiologicalReaction direction="left-to-right" evidence="1">
        <dbReference type="Rhea" id="RHEA:80988"/>
    </physiologicalReaction>
</comment>
<comment type="pathway">
    <text evidence="1">Secondary metabolite biosynthesis; terpenoid biosynthesis.</text>
</comment>
<comment type="induction">
    <text evidence="1">Expression is regulated by the secondary metabolite regulator cclA.</text>
</comment>
<comment type="similarity">
    <text evidence="3">Belongs to the HAD-like hydrolase superfamily.</text>
</comment>
<reference key="1">
    <citation type="journal article" date="2005" name="Nature">
        <title>Genome sequencing and analysis of Aspergillus oryzae.</title>
        <authorList>
            <person name="Machida M."/>
            <person name="Asai K."/>
            <person name="Sano M."/>
            <person name="Tanaka T."/>
            <person name="Kumagai T."/>
            <person name="Terai G."/>
            <person name="Kusumoto K."/>
            <person name="Arima T."/>
            <person name="Akita O."/>
            <person name="Kashiwagi Y."/>
            <person name="Abe K."/>
            <person name="Gomi K."/>
            <person name="Horiuchi H."/>
            <person name="Kitamoto K."/>
            <person name="Kobayashi T."/>
            <person name="Takeuchi M."/>
            <person name="Denning D.W."/>
            <person name="Galagan J.E."/>
            <person name="Nierman W.C."/>
            <person name="Yu J."/>
            <person name="Archer D.B."/>
            <person name="Bennett J.W."/>
            <person name="Bhatnagar D."/>
            <person name="Cleveland T.E."/>
            <person name="Fedorova N.D."/>
            <person name="Gotoh O."/>
            <person name="Horikawa H."/>
            <person name="Hosoyama A."/>
            <person name="Ichinomiya M."/>
            <person name="Igarashi R."/>
            <person name="Iwashita K."/>
            <person name="Juvvadi P.R."/>
            <person name="Kato M."/>
            <person name="Kato Y."/>
            <person name="Kin T."/>
            <person name="Kokubun A."/>
            <person name="Maeda H."/>
            <person name="Maeyama N."/>
            <person name="Maruyama J."/>
            <person name="Nagasaki H."/>
            <person name="Nakajima T."/>
            <person name="Oda K."/>
            <person name="Okada K."/>
            <person name="Paulsen I."/>
            <person name="Sakamoto K."/>
            <person name="Sawano T."/>
            <person name="Takahashi M."/>
            <person name="Takase K."/>
            <person name="Terabayashi Y."/>
            <person name="Wortman J.R."/>
            <person name="Yamada O."/>
            <person name="Yamagata Y."/>
            <person name="Anazawa H."/>
            <person name="Hata Y."/>
            <person name="Koide Y."/>
            <person name="Komori T."/>
            <person name="Koyama Y."/>
            <person name="Minetoki T."/>
            <person name="Suharnan S."/>
            <person name="Tanaka A."/>
            <person name="Isono K."/>
            <person name="Kuhara S."/>
            <person name="Ogasawara N."/>
            <person name="Kikuchi H."/>
        </authorList>
    </citation>
    <scope>NUCLEOTIDE SEQUENCE [LARGE SCALE GENOMIC DNA]</scope>
    <source>
        <strain>ATCC 42149 / RIB 40</strain>
    </source>
</reference>
<reference key="2">
    <citation type="journal article" date="2016" name="Sci. Rep.">
        <title>Identification of a novel sesquiterpene biosynthetic machinery involved in astellolide biosynthesis.</title>
        <authorList>
            <person name="Shinohara Y."/>
            <person name="Takahashi S."/>
            <person name="Osada H."/>
            <person name="Koyama Y."/>
        </authorList>
    </citation>
    <scope>INDUCTION</scope>
    <scope>FUNCTION</scope>
    <scope>CATALYTIC ACTIVITY</scope>
    <scope>PATHWAY</scope>
</reference>
<proteinExistence type="evidence at protein level"/>
<sequence length="196" mass="21913">MCTTFKAAIFDMGGVLFTWNPIVDTQVSLKDLGTIINSETWEQFERGKIEPDDCYHQLGSQIGLPGSEIAATFRQTTGCLRPDARMTSLLRELKGQGVAVYMMTNIPAPDFHQLREMHYEWDLFDGIFASALEGMRKPDLEFYEHVLKQIDTSAAETIFVDDKLENVIAAQAVGMVGLHLTDSLATCMELRQLVGC</sequence>
<gene>
    <name evidence="2" type="primary">astK</name>
    <name evidence="2" type="ORF">AORIB40_NS.05916</name>
</gene>
<feature type="chain" id="PRO_0000461392" description="Sesquiterpene phosphatase astK">
    <location>
        <begin position="1"/>
        <end position="196"/>
    </location>
</feature>
<dbReference type="EC" id="3.1.3.-" evidence="1"/>
<dbReference type="EMBL" id="BA000051">
    <property type="status" value="NOT_ANNOTATED_CDS"/>
    <property type="molecule type" value="Genomic_DNA"/>
</dbReference>
<dbReference type="RefSeq" id="XP_003189903.1">
    <property type="nucleotide sequence ID" value="XM_003189855.1"/>
</dbReference>
<dbReference type="SMR" id="P9WEM0"/>
<dbReference type="UniPathway" id="UPA00213"/>
<dbReference type="Proteomes" id="UP000006564">
    <property type="component" value="Chromosome 3"/>
</dbReference>
<dbReference type="GO" id="GO:0016791">
    <property type="term" value="F:phosphatase activity"/>
    <property type="evidence" value="ECO:0007669"/>
    <property type="project" value="UniProtKB-ARBA"/>
</dbReference>
<dbReference type="CDD" id="cd02603">
    <property type="entry name" value="HAD_sEH-N_like"/>
    <property type="match status" value="1"/>
</dbReference>
<dbReference type="Gene3D" id="3.40.50.1000">
    <property type="entry name" value="HAD superfamily/HAD-like"/>
    <property type="match status" value="1"/>
</dbReference>
<dbReference type="Gene3D" id="1.10.150.240">
    <property type="entry name" value="Putative phosphatase, domain 2"/>
    <property type="match status" value="1"/>
</dbReference>
<dbReference type="InterPro" id="IPR036412">
    <property type="entry name" value="HAD-like_sf"/>
</dbReference>
<dbReference type="InterPro" id="IPR006439">
    <property type="entry name" value="HAD-SF_hydro_IA"/>
</dbReference>
<dbReference type="InterPro" id="IPR023214">
    <property type="entry name" value="HAD_sf"/>
</dbReference>
<dbReference type="InterPro" id="IPR023198">
    <property type="entry name" value="PGP-like_dom2"/>
</dbReference>
<dbReference type="NCBIfam" id="TIGR01509">
    <property type="entry name" value="HAD-SF-IA-v3"/>
    <property type="match status" value="1"/>
</dbReference>
<dbReference type="PANTHER" id="PTHR43611">
    <property type="entry name" value="ALPHA-D-GLUCOSE 1-PHOSPHATE PHOSPHATASE"/>
    <property type="match status" value="1"/>
</dbReference>
<dbReference type="PANTHER" id="PTHR43611:SF3">
    <property type="entry name" value="FLAVIN MONONUCLEOTIDE HYDROLASE 1, CHLOROPLATIC"/>
    <property type="match status" value="1"/>
</dbReference>
<dbReference type="Pfam" id="PF00702">
    <property type="entry name" value="Hydrolase"/>
    <property type="match status" value="1"/>
</dbReference>
<dbReference type="PRINTS" id="PR00413">
    <property type="entry name" value="HADHALOGNASE"/>
</dbReference>
<dbReference type="SFLD" id="SFLDG01129">
    <property type="entry name" value="C1.5:_HAD__Beta-PGM__Phosphata"/>
    <property type="match status" value="1"/>
</dbReference>
<dbReference type="SFLD" id="SFLDS00003">
    <property type="entry name" value="Haloacid_Dehalogenase"/>
    <property type="match status" value="1"/>
</dbReference>
<dbReference type="SUPFAM" id="SSF56784">
    <property type="entry name" value="HAD-like"/>
    <property type="match status" value="1"/>
</dbReference>
<accession>P9WEM0</accession>
<keyword id="KW-0378">Hydrolase</keyword>
<keyword id="KW-1185">Reference proteome</keyword>